<accession>Q034T8</accession>
<sequence>MIYGIGVDVTDLARIQAAQEKNSGFAVKILTPTELANYQQLDGRRAVEYLSGRFSAKESYSKAFGTGLGKVALQDVEILNNELGKPILTKHPFSGQAFVSISHSETLVFTEVILEKEGPERDDR</sequence>
<keyword id="KW-0963">Cytoplasm</keyword>
<keyword id="KW-0275">Fatty acid biosynthesis</keyword>
<keyword id="KW-0276">Fatty acid metabolism</keyword>
<keyword id="KW-0444">Lipid biosynthesis</keyword>
<keyword id="KW-0443">Lipid metabolism</keyword>
<keyword id="KW-0460">Magnesium</keyword>
<keyword id="KW-0479">Metal-binding</keyword>
<keyword id="KW-1185">Reference proteome</keyword>
<keyword id="KW-0808">Transferase</keyword>
<dbReference type="EC" id="2.7.8.7" evidence="1"/>
<dbReference type="EMBL" id="CP000423">
    <property type="protein sequence ID" value="ABJ71284.1"/>
    <property type="molecule type" value="Genomic_DNA"/>
</dbReference>
<dbReference type="RefSeq" id="WP_003567669.1">
    <property type="nucleotide sequence ID" value="NC_008526.1"/>
</dbReference>
<dbReference type="RefSeq" id="YP_807726.1">
    <property type="nucleotide sequence ID" value="NC_008526.1"/>
</dbReference>
<dbReference type="SMR" id="Q034T8"/>
<dbReference type="STRING" id="321967.LSEI_2561"/>
<dbReference type="PaxDb" id="321967-LSEI_2561"/>
<dbReference type="GeneID" id="57091132"/>
<dbReference type="KEGG" id="lca:LSEI_2561"/>
<dbReference type="PATRIC" id="fig|321967.11.peg.2502"/>
<dbReference type="HOGENOM" id="CLU_089696_1_2_9"/>
<dbReference type="Proteomes" id="UP000001651">
    <property type="component" value="Chromosome"/>
</dbReference>
<dbReference type="GO" id="GO:0005737">
    <property type="term" value="C:cytoplasm"/>
    <property type="evidence" value="ECO:0007669"/>
    <property type="project" value="UniProtKB-SubCell"/>
</dbReference>
<dbReference type="GO" id="GO:0008897">
    <property type="term" value="F:holo-[acyl-carrier-protein] synthase activity"/>
    <property type="evidence" value="ECO:0007669"/>
    <property type="project" value="UniProtKB-UniRule"/>
</dbReference>
<dbReference type="GO" id="GO:0000287">
    <property type="term" value="F:magnesium ion binding"/>
    <property type="evidence" value="ECO:0007669"/>
    <property type="project" value="UniProtKB-UniRule"/>
</dbReference>
<dbReference type="GO" id="GO:0006633">
    <property type="term" value="P:fatty acid biosynthetic process"/>
    <property type="evidence" value="ECO:0007669"/>
    <property type="project" value="UniProtKB-UniRule"/>
</dbReference>
<dbReference type="Gene3D" id="3.90.470.20">
    <property type="entry name" value="4'-phosphopantetheinyl transferase domain"/>
    <property type="match status" value="1"/>
</dbReference>
<dbReference type="HAMAP" id="MF_00101">
    <property type="entry name" value="AcpS"/>
    <property type="match status" value="1"/>
</dbReference>
<dbReference type="InterPro" id="IPR008278">
    <property type="entry name" value="4-PPantetheinyl_Trfase_dom"/>
</dbReference>
<dbReference type="InterPro" id="IPR037143">
    <property type="entry name" value="4-PPantetheinyl_Trfase_dom_sf"/>
</dbReference>
<dbReference type="InterPro" id="IPR002582">
    <property type="entry name" value="ACPS"/>
</dbReference>
<dbReference type="InterPro" id="IPR004568">
    <property type="entry name" value="Ppantetheine-prot_Trfase_dom"/>
</dbReference>
<dbReference type="NCBIfam" id="TIGR00516">
    <property type="entry name" value="acpS"/>
    <property type="match status" value="1"/>
</dbReference>
<dbReference type="NCBIfam" id="TIGR00556">
    <property type="entry name" value="pantethn_trn"/>
    <property type="match status" value="1"/>
</dbReference>
<dbReference type="Pfam" id="PF01648">
    <property type="entry name" value="ACPS"/>
    <property type="match status" value="1"/>
</dbReference>
<dbReference type="SUPFAM" id="SSF56214">
    <property type="entry name" value="4'-phosphopantetheinyl transferase"/>
    <property type="match status" value="1"/>
</dbReference>
<organism>
    <name type="scientific">Lacticaseibacillus paracasei (strain ATCC 334 / BCRC 17002 / CCUG 31169 / CIP 107868 / KCTC 3260 / NRRL B-441)</name>
    <name type="common">Lactobacillus paracasei</name>
    <dbReference type="NCBI Taxonomy" id="321967"/>
    <lineage>
        <taxon>Bacteria</taxon>
        <taxon>Bacillati</taxon>
        <taxon>Bacillota</taxon>
        <taxon>Bacilli</taxon>
        <taxon>Lactobacillales</taxon>
        <taxon>Lactobacillaceae</taxon>
        <taxon>Lacticaseibacillus</taxon>
    </lineage>
</organism>
<protein>
    <recommendedName>
        <fullName evidence="1">Holo-[acyl-carrier-protein] synthase</fullName>
        <shortName evidence="1">Holo-ACP synthase</shortName>
        <ecNumber evidence="1">2.7.8.7</ecNumber>
    </recommendedName>
    <alternativeName>
        <fullName evidence="1">4'-phosphopantetheinyl transferase AcpS</fullName>
    </alternativeName>
</protein>
<reference key="1">
    <citation type="journal article" date="2006" name="Proc. Natl. Acad. Sci. U.S.A.">
        <title>Comparative genomics of the lactic acid bacteria.</title>
        <authorList>
            <person name="Makarova K.S."/>
            <person name="Slesarev A."/>
            <person name="Wolf Y.I."/>
            <person name="Sorokin A."/>
            <person name="Mirkin B."/>
            <person name="Koonin E.V."/>
            <person name="Pavlov A."/>
            <person name="Pavlova N."/>
            <person name="Karamychev V."/>
            <person name="Polouchine N."/>
            <person name="Shakhova V."/>
            <person name="Grigoriev I."/>
            <person name="Lou Y."/>
            <person name="Rohksar D."/>
            <person name="Lucas S."/>
            <person name="Huang K."/>
            <person name="Goodstein D.M."/>
            <person name="Hawkins T."/>
            <person name="Plengvidhya V."/>
            <person name="Welker D."/>
            <person name="Hughes J."/>
            <person name="Goh Y."/>
            <person name="Benson A."/>
            <person name="Baldwin K."/>
            <person name="Lee J.-H."/>
            <person name="Diaz-Muniz I."/>
            <person name="Dosti B."/>
            <person name="Smeianov V."/>
            <person name="Wechter W."/>
            <person name="Barabote R."/>
            <person name="Lorca G."/>
            <person name="Altermann E."/>
            <person name="Barrangou R."/>
            <person name="Ganesan B."/>
            <person name="Xie Y."/>
            <person name="Rawsthorne H."/>
            <person name="Tamir D."/>
            <person name="Parker C."/>
            <person name="Breidt F."/>
            <person name="Broadbent J.R."/>
            <person name="Hutkins R."/>
            <person name="O'Sullivan D."/>
            <person name="Steele J."/>
            <person name="Unlu G."/>
            <person name="Saier M.H. Jr."/>
            <person name="Klaenhammer T."/>
            <person name="Richardson P."/>
            <person name="Kozyavkin S."/>
            <person name="Weimer B.C."/>
            <person name="Mills D.A."/>
        </authorList>
    </citation>
    <scope>NUCLEOTIDE SEQUENCE [LARGE SCALE GENOMIC DNA]</scope>
    <source>
        <strain>ATCC 334 / BCRC 17002 / CCUG 31169 / CIP 107868 / KCTC 3260 / NRRL B-441</strain>
    </source>
</reference>
<name>ACPS_LACP3</name>
<proteinExistence type="inferred from homology"/>
<gene>
    <name evidence="1" type="primary">acpS</name>
    <name type="ordered locus">LSEI_2561</name>
</gene>
<evidence type="ECO:0000255" key="1">
    <source>
        <dbReference type="HAMAP-Rule" id="MF_00101"/>
    </source>
</evidence>
<comment type="function">
    <text evidence="1">Transfers the 4'-phosphopantetheine moiety from coenzyme A to a Ser of acyl-carrier-protein.</text>
</comment>
<comment type="catalytic activity">
    <reaction evidence="1">
        <text>apo-[ACP] + CoA = holo-[ACP] + adenosine 3',5'-bisphosphate + H(+)</text>
        <dbReference type="Rhea" id="RHEA:12068"/>
        <dbReference type="Rhea" id="RHEA-COMP:9685"/>
        <dbReference type="Rhea" id="RHEA-COMP:9690"/>
        <dbReference type="ChEBI" id="CHEBI:15378"/>
        <dbReference type="ChEBI" id="CHEBI:29999"/>
        <dbReference type="ChEBI" id="CHEBI:57287"/>
        <dbReference type="ChEBI" id="CHEBI:58343"/>
        <dbReference type="ChEBI" id="CHEBI:64479"/>
        <dbReference type="EC" id="2.7.8.7"/>
    </reaction>
</comment>
<comment type="cofactor">
    <cofactor evidence="1">
        <name>Mg(2+)</name>
        <dbReference type="ChEBI" id="CHEBI:18420"/>
    </cofactor>
</comment>
<comment type="subcellular location">
    <subcellularLocation>
        <location evidence="1">Cytoplasm</location>
    </subcellularLocation>
</comment>
<comment type="similarity">
    <text evidence="1">Belongs to the P-Pant transferase superfamily. AcpS family.</text>
</comment>
<feature type="chain" id="PRO_1000008437" description="Holo-[acyl-carrier-protein] synthase">
    <location>
        <begin position="1"/>
        <end position="124"/>
    </location>
</feature>
<feature type="binding site" evidence="1">
    <location>
        <position position="8"/>
    </location>
    <ligand>
        <name>Mg(2+)</name>
        <dbReference type="ChEBI" id="CHEBI:18420"/>
    </ligand>
</feature>
<feature type="binding site" evidence="1">
    <location>
        <position position="58"/>
    </location>
    <ligand>
        <name>Mg(2+)</name>
        <dbReference type="ChEBI" id="CHEBI:18420"/>
    </ligand>
</feature>